<gene>
    <name evidence="3" type="primary">lbtA</name>
</gene>
<protein>
    <recommendedName>
        <fullName evidence="4">Putative C(50) carotenoid beta-cyclase subunit A</fullName>
        <ecNumber evidence="5">5.5.1.-</ecNumber>
    </recommendedName>
</protein>
<name>LBTA_DIESC</name>
<feature type="chain" id="PRO_0000450596" description="Putative C(50) carotenoid beta-cyclase subunit A">
    <location>
        <begin position="1"/>
        <end position="124"/>
    </location>
</feature>
<feature type="transmembrane region" description="Helical" evidence="1">
    <location>
        <begin position="1"/>
        <end position="21"/>
    </location>
</feature>
<feature type="transmembrane region" description="Helical" evidence="1">
    <location>
        <begin position="34"/>
        <end position="54"/>
    </location>
</feature>
<feature type="transmembrane region" description="Helical" evidence="1">
    <location>
        <begin position="78"/>
        <end position="98"/>
    </location>
</feature>
<proteinExistence type="evidence at protein level"/>
<comment type="function">
    <text evidence="2 5">Involved in the biosynthesis of C(50) beta-cyclic carotenoids (PubMed:17008032). May have C(50) carotenoid beta-cyclase activity and produce the C(50) beta-cyclic carotenoid C.p.450 from the C(50) carotenoid dihydrobisanhydrobacterioruberin (DH-BABR) (Probable).</text>
</comment>
<comment type="pathway">
    <text evidence="2">Carotenoid biosynthesis.</text>
</comment>
<comment type="subunit">
    <text evidence="5">May form a complex with LbtBC.</text>
</comment>
<comment type="subcellular location">
    <subcellularLocation>
        <location evidence="4">Cell membrane</location>
        <topology evidence="1">Multi-pass membrane protein</topology>
    </subcellularLocation>
</comment>
<comment type="similarity">
    <text evidence="4">Belongs to the lycopene beta-cyclase family.</text>
</comment>
<accession>A1XI29</accession>
<evidence type="ECO:0000255" key="1"/>
<evidence type="ECO:0000269" key="2">
    <source>
    </source>
</evidence>
<evidence type="ECO:0000303" key="3">
    <source>
    </source>
</evidence>
<evidence type="ECO:0000305" key="4"/>
<evidence type="ECO:0000305" key="5">
    <source>
    </source>
</evidence>
<sequence length="124" mass="13367">MIGLSYLLVQVVSFAGILVIDHRWKLAAFRAPAAAALAVTASVALLLTWDVLGVRSGVFFRGQTDFMTGLLVAPEIPFEEVVFLAFLSHLALVCAAGVSRAVDHARDSRAARASRPSRMTGERR</sequence>
<keyword id="KW-0125">Carotenoid biosynthesis</keyword>
<keyword id="KW-1003">Cell membrane</keyword>
<keyword id="KW-0413">Isomerase</keyword>
<keyword id="KW-0472">Membrane</keyword>
<keyword id="KW-0812">Transmembrane</keyword>
<keyword id="KW-1133">Transmembrane helix</keyword>
<reference key="1">
    <citation type="journal article" date="2007" name="Gene">
        <title>Genes from a Dietzia sp. for synthesis of C40 and C50 beta-cyclic carotenoids.</title>
        <authorList>
            <person name="Tao L."/>
            <person name="Yao H."/>
            <person name="Cheng Q."/>
        </authorList>
    </citation>
    <scope>NUCLEOTIDE SEQUENCE [GENOMIC DNA]</scope>
    <scope>FUNCTION</scope>
    <scope>PATHWAY</scope>
    <scope>SUBUNIT</scope>
    <source>
        <strain>CQ4</strain>
    </source>
</reference>
<organism>
    <name type="scientific">Dietzia sp. (strain CQ4)</name>
    <dbReference type="NCBI Taxonomy" id="370437"/>
    <lineage>
        <taxon>Bacteria</taxon>
        <taxon>Bacillati</taxon>
        <taxon>Actinomycetota</taxon>
        <taxon>Actinomycetes</taxon>
        <taxon>Mycobacteriales</taxon>
        <taxon>Dietziaceae</taxon>
        <taxon>Dietzia</taxon>
    </lineage>
</organism>
<dbReference type="EC" id="5.5.1.-" evidence="5"/>
<dbReference type="EMBL" id="DQ369754">
    <property type="protein sequence ID" value="ABD24401.1"/>
    <property type="molecule type" value="Genomic_DNA"/>
</dbReference>
<dbReference type="RefSeq" id="WP_179523180.1">
    <property type="nucleotide sequence ID" value="NZ_JAALDZ010000349.1"/>
</dbReference>
<dbReference type="KEGG" id="ag:ABD24401"/>
<dbReference type="BioCyc" id="MetaCyc:MONOMER-20368"/>
<dbReference type="BRENDA" id="2.5.1.150">
    <property type="organism ID" value="16303"/>
</dbReference>
<dbReference type="GO" id="GO:0005886">
    <property type="term" value="C:plasma membrane"/>
    <property type="evidence" value="ECO:0007669"/>
    <property type="project" value="UniProtKB-SubCell"/>
</dbReference>
<dbReference type="GO" id="GO:0016872">
    <property type="term" value="F:intramolecular lyase activity"/>
    <property type="evidence" value="ECO:0007669"/>
    <property type="project" value="InterPro"/>
</dbReference>
<dbReference type="GO" id="GO:0045436">
    <property type="term" value="F:lycopene beta cyclase activity"/>
    <property type="evidence" value="ECO:0007669"/>
    <property type="project" value="UniProtKB-ARBA"/>
</dbReference>
<dbReference type="GO" id="GO:0016117">
    <property type="term" value="P:carotenoid biosynthetic process"/>
    <property type="evidence" value="ECO:0007669"/>
    <property type="project" value="UniProtKB-KW"/>
</dbReference>
<dbReference type="InterPro" id="IPR017825">
    <property type="entry name" value="Lycopene_cyclase_dom"/>
</dbReference>
<dbReference type="NCBIfam" id="TIGR03462">
    <property type="entry name" value="CarR_dom_SF"/>
    <property type="match status" value="1"/>
</dbReference>